<sequence length="2013" mass="222268">MWILALSLFQSFANVFSEEPHSSLYFVNASLQEVVFASTSGTLVPCPAAGIPPVTLRWYLATGEEIYDVPGIRHVHPNGTLQIFPFPPSSFSTLIHDNTYYCTAENPSGKIRSQDVHIKAVLREPYTVRVEDQKTMRGNVAVFKCIIPSSVEAYVTVVSWEKDTVSLVSGSRFLITSTGALYIKDVQNEDGLYNYRCITRHRYTGETRQSNSARLFVSDPANSAPSILDGFDHRKAMAGQRVELPCKALGHPEPDYRWLKDNMPLELSGRFQKTVTGLLIENSRPSDSGSYVCEVSNRYGTAKVIGRLYVKQPLKATISPRKVKSSVGSQVSLSCSVTGNEDQELSWYRNGEILNPGKNVRITGLNHANLIMDHMVKSDGGAYQCFVRKDKLSAQDYVQVVLEDGTPKIISAFSEKVVSPAEPVSLVCNVKGTPLPTVTWTLDDDPILKGSGHRISQMITSEGNVVSYLNISSSQVRDGGVYRCTANNSAGVVLYQARINVRGPASIRPMKNITAIAGRDTYIHCRVIGYPYYSIKWYKNANLLPFNHRQVAFENNGTLKLSDVQKEVDEGEYTCNVLVQPQLSTSQSVHVTVKVPPFIQPFEFPRFSIGQRVFIPCVVVSGDLPITITWQKDGRPIPASLGVTIDNIDFTSSLRISNLSLMHNGNYTCIARNEAAAVEHQSQLIVRVPPKFVVQPRDQDGIYGKAVILNCSAEGYPVPTIVWKFSKGAGVPQFQPIALNGRIQVLSNGSLLIKHVVEEDSGYYLCKVSNDVGADVSKSMYLTVKIPAMITSYPNTTLATQGQRKEMSCTAHGEKPIIVRWEKEDRIINPEMARYLVSTKEVGEEVISTLQILPTVREDSGFFSCHAINSYGEDRGIIQLTVQEPPDPPEIEIKDVKARTITLRWTMGFDGNSPITGYDIECKNKSDSWDSAQRTKDVSPQLNSATIIDIHPSSTYSIRMYAKNRIGKSEPSNEITITADEAAPDGPPQEVHLEPTSSQSIRVTWKAPKKHLQNGIIRGYQIGYREYSTGGNFQFNIISIDTTGDSEVYTLDNLNKFTQYGLVVQACNRAGTGPSSQEIITTTLEDVPSYPPENVQAIATSPESISISWSTLSKEALNGILQGFRVIYWANLIDGELGEIKNVTTTQPSLELDGLEKYTNYSIQVLAFTRAGDGVRSEQIFTRTKEDVPGPPAGVKAAAASASMVFVSWLPPLKLNGIIRKYTVFCSHPYPTVISEFEASPDSFSYRIPNLSRNRQYSVWVVAVTSAGRGNSSEIITVEPLAKAPARILTFSGTVTTPWMKDIVLPCKAVGDPSPAVKWMKDSNGTPSLVTIDGRRSIFSNGSFIIRTVKAEDSGYYSCVANNNWGSDEIILNLQVQVPPDQPRLTVSKTTSSSITLSWLPGDNGGSSIRGYILQYSEDNSEQWGSFPISPSERSYRLENLKCGTWYKFTLTAQNGVGPGRISEIIEAKTLGKEPQFSKEQELFASINTTRVRLNLIGWNDGGCPITSFTLEYRPFGTTVWTTAQRTSLSKSYILYDLQEATWYELQMRVCNSAGCAEKQANFATLNYDGSTIPPLIKSVVQSEEGLTTNEGLKILVTISCILVGVLLLFVLLLVVRRRRREQRLKRLRDAKSLAEMLMSKNTRTSDTLSKQQQTLRMHIDIPRAQLLIEERDTMETIDDRSTVLLTDADFGEAAKQKSLTVTHTVHYQSVSQATGPLVDVSDARPGTNPTTRRNAKAGPTARNRYASQWTLNRPHPTISAHTLTTDWRLPTPRATGSVDKESDSYSVSPSQDTDRARSSMVSTESASSTYEELARAYEHAKMEEQLRHAKFTITECFISDTSSEQLTAGTNEYTDSLTSSTPSESGICRFTASPPKPQDGGRVVNMAVPKAHRPGDLIHLPPYLRMDFLLNRGAPGTSRDLSLGQACLEPQKSRTLKRPTVLEPTPMEASSSTSSTREGQQSWQQGAVATLPQREGAELGQAAKMSSSQESLLDSRGHLKGNNPYAKSYTLV</sequence>
<organism>
    <name type="scientific">Mus musculus</name>
    <name type="common">Mouse</name>
    <dbReference type="NCBI Taxonomy" id="10090"/>
    <lineage>
        <taxon>Eukaryota</taxon>
        <taxon>Metazoa</taxon>
        <taxon>Chordata</taxon>
        <taxon>Craniata</taxon>
        <taxon>Vertebrata</taxon>
        <taxon>Euteleostomi</taxon>
        <taxon>Mammalia</taxon>
        <taxon>Eutheria</taxon>
        <taxon>Euarchontoglires</taxon>
        <taxon>Glires</taxon>
        <taxon>Rodentia</taxon>
        <taxon>Myomorpha</taxon>
        <taxon>Muroidea</taxon>
        <taxon>Muridae</taxon>
        <taxon>Murinae</taxon>
        <taxon>Mus</taxon>
        <taxon>Mus</taxon>
    </lineage>
</organism>
<dbReference type="EMBL" id="AY005483">
    <property type="protein sequence ID" value="AAF99440.1"/>
    <property type="molecule type" value="mRNA"/>
</dbReference>
<dbReference type="EMBL" id="AF315558">
    <property type="protein sequence ID" value="AAG28796.1"/>
    <property type="molecule type" value="mRNA"/>
</dbReference>
<dbReference type="EMBL" id="CH466602">
    <property type="protein sequence ID" value="EDL03664.1"/>
    <property type="molecule type" value="Genomic_DNA"/>
</dbReference>
<dbReference type="CCDS" id="CCDS37415.1"/>
<dbReference type="RefSeq" id="NP_112451.1">
    <property type="nucleotide sequence ID" value="NM_031174.4"/>
</dbReference>
<dbReference type="SMR" id="Q9ERC8"/>
<dbReference type="BioGRID" id="199321">
    <property type="interactions" value="12"/>
</dbReference>
<dbReference type="FunCoup" id="Q9ERC8">
    <property type="interactions" value="209"/>
</dbReference>
<dbReference type="IntAct" id="Q9ERC8">
    <property type="interactions" value="9"/>
</dbReference>
<dbReference type="STRING" id="10090.ENSMUSP00000056040"/>
<dbReference type="GlyCosmos" id="Q9ERC8">
    <property type="glycosylation" value="5 sites, No reported glycans"/>
</dbReference>
<dbReference type="GlyGen" id="Q9ERC8">
    <property type="glycosylation" value="18 sites, 10 N-linked glycans (13 sites), 1 O-linked glycan (1 site)"/>
</dbReference>
<dbReference type="iPTMnet" id="Q9ERC8"/>
<dbReference type="PhosphoSitePlus" id="Q9ERC8"/>
<dbReference type="PaxDb" id="10090-ENSMUSP00000056040"/>
<dbReference type="ProteomicsDB" id="279810"/>
<dbReference type="Antibodypedia" id="23484">
    <property type="antibodies" value="159 antibodies from 31 providers"/>
</dbReference>
<dbReference type="DNASU" id="13508"/>
<dbReference type="Ensembl" id="ENSMUST00000056102.9">
    <property type="protein sequence ID" value="ENSMUSP00000056040.8"/>
    <property type="gene ID" value="ENSMUSG00000050272.11"/>
</dbReference>
<dbReference type="GeneID" id="13508"/>
<dbReference type="KEGG" id="mmu:13508"/>
<dbReference type="UCSC" id="uc008add.2">
    <property type="organism name" value="mouse"/>
</dbReference>
<dbReference type="AGR" id="MGI:1196281"/>
<dbReference type="CTD" id="1826"/>
<dbReference type="MGI" id="MGI:1196281">
    <property type="gene designation" value="Dscam"/>
</dbReference>
<dbReference type="VEuPathDB" id="HostDB:ENSMUSG00000050272"/>
<dbReference type="eggNOG" id="KOG3510">
    <property type="taxonomic scope" value="Eukaryota"/>
</dbReference>
<dbReference type="GeneTree" id="ENSGT00940000154678"/>
<dbReference type="HOGENOM" id="CLU_001038_0_1_1"/>
<dbReference type="InParanoid" id="Q9ERC8"/>
<dbReference type="OMA" id="DGFDHHK"/>
<dbReference type="OrthoDB" id="152385at2759"/>
<dbReference type="PhylomeDB" id="Q9ERC8"/>
<dbReference type="TreeFam" id="TF316846"/>
<dbReference type="Reactome" id="R-MMU-376172">
    <property type="pathway name" value="DSCAM interactions"/>
</dbReference>
<dbReference type="BioGRID-ORCS" id="13508">
    <property type="hits" value="1 hit in 78 CRISPR screens"/>
</dbReference>
<dbReference type="ChiTaRS" id="Dscam">
    <property type="organism name" value="mouse"/>
</dbReference>
<dbReference type="PRO" id="PR:Q9ERC8"/>
<dbReference type="Proteomes" id="UP000000589">
    <property type="component" value="Chromosome 16"/>
</dbReference>
<dbReference type="RNAct" id="Q9ERC8">
    <property type="molecule type" value="protein"/>
</dbReference>
<dbReference type="Bgee" id="ENSMUSG00000050272">
    <property type="expression patterns" value="Expressed in cortical plate and 125 other cell types or tissues"/>
</dbReference>
<dbReference type="ExpressionAtlas" id="Q9ERC8">
    <property type="expression patterns" value="baseline and differential"/>
</dbReference>
<dbReference type="GO" id="GO:0030424">
    <property type="term" value="C:axon"/>
    <property type="evidence" value="ECO:0000314"/>
    <property type="project" value="UniProtKB"/>
</dbReference>
<dbReference type="GO" id="GO:0030425">
    <property type="term" value="C:dendrite"/>
    <property type="evidence" value="ECO:0000314"/>
    <property type="project" value="UniProtKB"/>
</dbReference>
<dbReference type="GO" id="GO:0030426">
    <property type="term" value="C:growth cone"/>
    <property type="evidence" value="ECO:0000314"/>
    <property type="project" value="UniProtKB"/>
</dbReference>
<dbReference type="GO" id="GO:0043025">
    <property type="term" value="C:neuronal cell body"/>
    <property type="evidence" value="ECO:0000314"/>
    <property type="project" value="UniProtKB"/>
</dbReference>
<dbReference type="GO" id="GO:0005886">
    <property type="term" value="C:plasma membrane"/>
    <property type="evidence" value="ECO:0000314"/>
    <property type="project" value="UniProtKB"/>
</dbReference>
<dbReference type="GO" id="GO:0045202">
    <property type="term" value="C:synapse"/>
    <property type="evidence" value="ECO:0000250"/>
    <property type="project" value="UniProtKB"/>
</dbReference>
<dbReference type="GO" id="GO:1990890">
    <property type="term" value="F:netrin receptor binding"/>
    <property type="evidence" value="ECO:0000353"/>
    <property type="project" value="UniProtKB"/>
</dbReference>
<dbReference type="GO" id="GO:1990782">
    <property type="term" value="F:protein tyrosine kinase binding"/>
    <property type="evidence" value="ECO:0000353"/>
    <property type="project" value="UniProtKB"/>
</dbReference>
<dbReference type="GO" id="GO:0007411">
    <property type="term" value="P:axon guidance"/>
    <property type="evidence" value="ECO:0000314"/>
    <property type="project" value="UniProtKB"/>
</dbReference>
<dbReference type="GO" id="GO:0060219">
    <property type="term" value="P:camera-type eye photoreceptor cell differentiation"/>
    <property type="evidence" value="ECO:0000250"/>
    <property type="project" value="UniProtKB"/>
</dbReference>
<dbReference type="GO" id="GO:0048813">
    <property type="term" value="P:dendrite morphogenesis"/>
    <property type="evidence" value="ECO:0000315"/>
    <property type="project" value="MGI"/>
</dbReference>
<dbReference type="GO" id="GO:0070593">
    <property type="term" value="P:dendrite self-avoidance"/>
    <property type="evidence" value="ECO:0000315"/>
    <property type="project" value="UniProtKB"/>
</dbReference>
<dbReference type="GO" id="GO:0060996">
    <property type="term" value="P:dendritic spine development"/>
    <property type="evidence" value="ECO:0000314"/>
    <property type="project" value="MGI"/>
</dbReference>
<dbReference type="GO" id="GO:0007156">
    <property type="term" value="P:homophilic cell adhesion via plasma membrane adhesion molecules"/>
    <property type="evidence" value="ECO:0000250"/>
    <property type="project" value="UniProtKB"/>
</dbReference>
<dbReference type="GO" id="GO:0007626">
    <property type="term" value="P:locomotory behavior"/>
    <property type="evidence" value="ECO:0000315"/>
    <property type="project" value="MGI"/>
</dbReference>
<dbReference type="GO" id="GO:0007162">
    <property type="term" value="P:negative regulation of cell adhesion"/>
    <property type="evidence" value="ECO:0000315"/>
    <property type="project" value="UniProtKB"/>
</dbReference>
<dbReference type="GO" id="GO:0038007">
    <property type="term" value="P:netrin-activated signaling pathway"/>
    <property type="evidence" value="ECO:0000314"/>
    <property type="project" value="UniProtKB"/>
</dbReference>
<dbReference type="GO" id="GO:0048842">
    <property type="term" value="P:positive regulation of axon extension involved in axon guidance"/>
    <property type="evidence" value="ECO:0000314"/>
    <property type="project" value="UniProtKB"/>
</dbReference>
<dbReference type="GO" id="GO:0042327">
    <property type="term" value="P:positive regulation of phosphorylation"/>
    <property type="evidence" value="ECO:0000250"/>
    <property type="project" value="UniProtKB"/>
</dbReference>
<dbReference type="GO" id="GO:0060060">
    <property type="term" value="P:post-embryonic retina morphogenesis in camera-type eye"/>
    <property type="evidence" value="ECO:0000315"/>
    <property type="project" value="MGI"/>
</dbReference>
<dbReference type="GO" id="GO:0010842">
    <property type="term" value="P:retina layer formation"/>
    <property type="evidence" value="ECO:0000250"/>
    <property type="project" value="UniProtKB"/>
</dbReference>
<dbReference type="GO" id="GO:0035176">
    <property type="term" value="P:social behavior"/>
    <property type="evidence" value="ECO:0000315"/>
    <property type="project" value="MGI"/>
</dbReference>
<dbReference type="GO" id="GO:0007416">
    <property type="term" value="P:synapse assembly"/>
    <property type="evidence" value="ECO:0000250"/>
    <property type="project" value="UniProtKB"/>
</dbReference>
<dbReference type="GO" id="GO:0035249">
    <property type="term" value="P:synaptic transmission, glutamatergic"/>
    <property type="evidence" value="ECO:0000315"/>
    <property type="project" value="MGI"/>
</dbReference>
<dbReference type="CDD" id="cd00063">
    <property type="entry name" value="FN3"/>
    <property type="match status" value="6"/>
</dbReference>
<dbReference type="CDD" id="cd00096">
    <property type="entry name" value="Ig"/>
    <property type="match status" value="2"/>
</dbReference>
<dbReference type="CDD" id="cd05734">
    <property type="entry name" value="Ig_DSCAM"/>
    <property type="match status" value="1"/>
</dbReference>
<dbReference type="CDD" id="cd05735">
    <property type="entry name" value="Ig_DSCAM"/>
    <property type="match status" value="1"/>
</dbReference>
<dbReference type="FunFam" id="2.60.40.10:FF:000333">
    <property type="entry name" value="Down syndrome cell adhesion molecule"/>
    <property type="match status" value="1"/>
</dbReference>
<dbReference type="FunFam" id="2.60.40.10:FF:000401">
    <property type="entry name" value="Down syndrome cell adhesion molecule"/>
    <property type="match status" value="1"/>
</dbReference>
<dbReference type="FunFam" id="2.60.40.10:FF:000729">
    <property type="entry name" value="Down syndrome cell adhesion molecule"/>
    <property type="match status" value="1"/>
</dbReference>
<dbReference type="FunFam" id="2.60.40.10:FF:000141">
    <property type="entry name" value="Down syndrome cell adhesion molecule a"/>
    <property type="match status" value="1"/>
</dbReference>
<dbReference type="FunFam" id="2.60.40.10:FF:000176">
    <property type="entry name" value="Down syndrome cell adhesion molecule a"/>
    <property type="match status" value="1"/>
</dbReference>
<dbReference type="FunFam" id="2.60.40.10:FF:000215">
    <property type="entry name" value="Down syndrome cell adhesion molecule a"/>
    <property type="match status" value="1"/>
</dbReference>
<dbReference type="FunFam" id="2.60.40.10:FF:000017">
    <property type="entry name" value="Down syndrome cell adhesion molecule b"/>
    <property type="match status" value="1"/>
</dbReference>
<dbReference type="FunFam" id="2.60.40.10:FF:000104">
    <property type="entry name" value="Down syndrome cell adhesion molecule b"/>
    <property type="match status" value="1"/>
</dbReference>
<dbReference type="FunFam" id="2.60.40.10:FF:000167">
    <property type="entry name" value="Down syndrome cell adhesion molecule b"/>
    <property type="match status" value="1"/>
</dbReference>
<dbReference type="FunFam" id="2.60.40.10:FF:000172">
    <property type="entry name" value="Down syndrome cell adhesion molecule b"/>
    <property type="match status" value="1"/>
</dbReference>
<dbReference type="FunFam" id="2.60.40.10:FF:000219">
    <property type="entry name" value="Down syndrome cell adhesion molecule homolog"/>
    <property type="match status" value="1"/>
</dbReference>
<dbReference type="FunFam" id="2.60.40.10:FF:000229">
    <property type="entry name" value="Down syndrome cell adhesion molecule homolog"/>
    <property type="match status" value="1"/>
</dbReference>
<dbReference type="FunFam" id="2.60.40.10:FF:000120">
    <property type="entry name" value="Down syndrome cell adhesion molecule like 1"/>
    <property type="match status" value="1"/>
</dbReference>
<dbReference type="FunFam" id="2.60.40.10:FF:000264">
    <property type="entry name" value="Down syndrome cell adhesion molecule like 1"/>
    <property type="match status" value="1"/>
</dbReference>
<dbReference type="FunFam" id="2.60.40.10:FF:000315">
    <property type="entry name" value="Down syndrome cell adhesion molecule like 1"/>
    <property type="match status" value="1"/>
</dbReference>
<dbReference type="FunFam" id="2.60.40.10:FF:000477">
    <property type="entry name" value="DS cell adhesion molecule like 1"/>
    <property type="match status" value="1"/>
</dbReference>
<dbReference type="Gene3D" id="2.60.40.10">
    <property type="entry name" value="Immunoglobulins"/>
    <property type="match status" value="16"/>
</dbReference>
<dbReference type="InterPro" id="IPR056754">
    <property type="entry name" value="DSCAM/DSCAML_C"/>
</dbReference>
<dbReference type="InterPro" id="IPR003961">
    <property type="entry name" value="FN3_dom"/>
</dbReference>
<dbReference type="InterPro" id="IPR036116">
    <property type="entry name" value="FN3_sf"/>
</dbReference>
<dbReference type="InterPro" id="IPR007110">
    <property type="entry name" value="Ig-like_dom"/>
</dbReference>
<dbReference type="InterPro" id="IPR036179">
    <property type="entry name" value="Ig-like_dom_sf"/>
</dbReference>
<dbReference type="InterPro" id="IPR013783">
    <property type="entry name" value="Ig-like_fold"/>
</dbReference>
<dbReference type="InterPro" id="IPR013098">
    <property type="entry name" value="Ig_I-set"/>
</dbReference>
<dbReference type="InterPro" id="IPR003599">
    <property type="entry name" value="Ig_sub"/>
</dbReference>
<dbReference type="InterPro" id="IPR003598">
    <property type="entry name" value="Ig_sub2"/>
</dbReference>
<dbReference type="InterPro" id="IPR013106">
    <property type="entry name" value="Ig_V-set"/>
</dbReference>
<dbReference type="PANTHER" id="PTHR44170:SF6">
    <property type="entry name" value="CONTACTIN"/>
    <property type="match status" value="1"/>
</dbReference>
<dbReference type="PANTHER" id="PTHR44170">
    <property type="entry name" value="PROTEIN SIDEKICK"/>
    <property type="match status" value="1"/>
</dbReference>
<dbReference type="Pfam" id="PF00041">
    <property type="entry name" value="fn3"/>
    <property type="match status" value="5"/>
</dbReference>
<dbReference type="Pfam" id="PF25059">
    <property type="entry name" value="FN3_DSCAM-DSCAML_C"/>
    <property type="match status" value="1"/>
</dbReference>
<dbReference type="Pfam" id="PF07679">
    <property type="entry name" value="I-set"/>
    <property type="match status" value="5"/>
</dbReference>
<dbReference type="Pfam" id="PF13927">
    <property type="entry name" value="Ig_3"/>
    <property type="match status" value="3"/>
</dbReference>
<dbReference type="SMART" id="SM00060">
    <property type="entry name" value="FN3"/>
    <property type="match status" value="6"/>
</dbReference>
<dbReference type="SMART" id="SM00409">
    <property type="entry name" value="IG"/>
    <property type="match status" value="9"/>
</dbReference>
<dbReference type="SMART" id="SM00408">
    <property type="entry name" value="IGc2"/>
    <property type="match status" value="9"/>
</dbReference>
<dbReference type="SMART" id="SM00406">
    <property type="entry name" value="IGv"/>
    <property type="match status" value="4"/>
</dbReference>
<dbReference type="SUPFAM" id="SSF49265">
    <property type="entry name" value="Fibronectin type III"/>
    <property type="match status" value="3"/>
</dbReference>
<dbReference type="SUPFAM" id="SSF48726">
    <property type="entry name" value="Immunoglobulin"/>
    <property type="match status" value="10"/>
</dbReference>
<dbReference type="PROSITE" id="PS50853">
    <property type="entry name" value="FN3"/>
    <property type="match status" value="6"/>
</dbReference>
<dbReference type="PROSITE" id="PS50835">
    <property type="entry name" value="IG_LIKE"/>
    <property type="match status" value="10"/>
</dbReference>
<keyword id="KW-0130">Cell adhesion</keyword>
<keyword id="KW-1003">Cell membrane</keyword>
<keyword id="KW-0966">Cell projection</keyword>
<keyword id="KW-1015">Disulfide bond</keyword>
<keyword id="KW-0325">Glycoprotein</keyword>
<keyword id="KW-0393">Immunoglobulin domain</keyword>
<keyword id="KW-0472">Membrane</keyword>
<keyword id="KW-0524">Neurogenesis</keyword>
<keyword id="KW-0597">Phosphoprotein</keyword>
<keyword id="KW-1185">Reference proteome</keyword>
<keyword id="KW-0677">Repeat</keyword>
<keyword id="KW-0732">Signal</keyword>
<keyword id="KW-0770">Synapse</keyword>
<keyword id="KW-0812">Transmembrane</keyword>
<keyword id="KW-1133">Transmembrane helix</keyword>
<accession>Q9ERC8</accession>
<protein>
    <recommendedName>
        <fullName evidence="14">Cell adhesion molecule DSCAM</fullName>
    </recommendedName>
    <alternativeName>
        <fullName>Down syndrome cell adhesion molecule homolog</fullName>
    </alternativeName>
</protein>
<reference key="1">
    <citation type="journal article" date="2001" name="Biochem. Biophys. Res. Commun.">
        <title>DSCAM, a highly conserved gene in mammals, expressed in differentiating mouse brain.</title>
        <authorList>
            <person name="Agarwala K.L."/>
            <person name="Ganesh S."/>
            <person name="Amano K."/>
            <person name="Suzuki T."/>
            <person name="Yamakawa K."/>
        </authorList>
    </citation>
    <scope>NUCLEOTIDE SEQUENCE [MRNA]</scope>
    <scope>TISSUE SPECIFICITY</scope>
    <scope>DEVELOPMENTAL STAGE</scope>
    <source>
        <strain>ICR</strain>
    </source>
</reference>
<reference key="2">
    <citation type="journal article" date="2001" name="Cytogenet. Cell Genet.">
        <title>Down syndrome cell adhesion molecule is conserved in mouse and highly expressed in the adult mouse brain.</title>
        <authorList>
            <person name="Barlow G.M."/>
            <person name="Micales B."/>
            <person name="Lyons G.E."/>
            <person name="Korenberg J.R."/>
        </authorList>
    </citation>
    <scope>NUCLEOTIDE SEQUENCE [MRNA]</scope>
    <scope>TISSUE SPECIFICITY</scope>
    <source>
        <strain>C57BL/6J</strain>
        <tissue>Brain</tissue>
    </source>
</reference>
<reference key="3">
    <citation type="submission" date="2005-09" db="EMBL/GenBank/DDBJ databases">
        <authorList>
            <person name="Mural R.J."/>
            <person name="Adams M.D."/>
            <person name="Myers E.W."/>
            <person name="Smith H.O."/>
            <person name="Venter J.C."/>
        </authorList>
    </citation>
    <scope>NUCLEOTIDE SEQUENCE [LARGE SCALE GENOMIC DNA]</scope>
</reference>
<reference key="4">
    <citation type="journal article" date="2004" name="J. Biol. Chem.">
        <title>The Down syndrome cell adhesion molecule (DSCAM) interacts with and activates Pak.</title>
        <authorList>
            <person name="Li W."/>
            <person name="Guan K.L."/>
        </authorList>
    </citation>
    <scope>RETRACTED PAPER</scope>
</reference>
<reference key="5">
    <citation type="journal article" date="2015" name="J. Biol. Chem.">
        <title>The Down syndrome cell adhesion molecule (DSCAM) interacts with and activates Pak.</title>
        <authorList>
            <person name="Li W."/>
            <person name="Guan K.L."/>
        </authorList>
    </citation>
    <scope>RETRACTION NOTICE OF PUBMED:15169762</scope>
</reference>
<reference key="6">
    <citation type="journal article" date="2008" name="Cell">
        <title>DSCAM is a netrin receptor that collaborates with DCC in mediating turning responses to netrin-1.</title>
        <authorList>
            <person name="Ly A."/>
            <person name="Nikolaev A."/>
            <person name="Suresh G."/>
            <person name="Zheng Y."/>
            <person name="Tessier-Lavigne M."/>
            <person name="Stein E."/>
        </authorList>
    </citation>
    <scope>FUNCTION</scope>
    <scope>INTERACTION WITH DCC AND NTN1</scope>
</reference>
<reference key="7">
    <citation type="journal article" date="2008" name="Nature">
        <title>Neurite arborization and mosaic spacing in the mouse retina require DSCAM.</title>
        <authorList>
            <person name="Fuerst P.G."/>
            <person name="Koizumi A."/>
            <person name="Masland R.H."/>
            <person name="Burgess R.W."/>
        </authorList>
    </citation>
    <scope>FUNCTION</scope>
    <scope>DISRUPTION PHENOTYPE</scope>
    <scope>TISSUE SPECIFICITY</scope>
</reference>
<reference key="8">
    <citation type="journal article" date="2009" name="Neuron">
        <title>DSCAM and DSCAML1 function in self-avoidance in multiple cell types in the developing mouse retina.</title>
        <authorList>
            <person name="Fuerst P.G."/>
            <person name="Bruce F."/>
            <person name="Tian M."/>
            <person name="Wei W."/>
            <person name="Elstrott J."/>
            <person name="Feller M.B."/>
            <person name="Erskine L."/>
            <person name="Singer J.H."/>
            <person name="Burgess R.W."/>
        </authorList>
    </citation>
    <scope>FUNCTION</scope>
    <scope>DISRUPTION PHENOTYPE</scope>
    <scope>TISSUE SPECIFICITY</scope>
    <scope>DEVELOPMENTAL STAGE</scope>
</reference>
<reference key="9">
    <citation type="journal article" date="2009" name="Proc. Natl. Acad. Sci. U.S.A.">
        <title>DSCAM functions as a netrin receptor in commissural axon pathfinding.</title>
        <authorList>
            <person name="Liu G."/>
            <person name="Li W."/>
            <person name="Wang L."/>
            <person name="Kar A."/>
            <person name="Guan K.L."/>
            <person name="Rao Y."/>
            <person name="Wu J.Y."/>
        </authorList>
    </citation>
    <scope>FUNCTION</scope>
    <scope>DEVELOPMENTAL STAGE</scope>
    <scope>SUBCELLULAR LOCATION</scope>
</reference>
<reference key="10">
    <citation type="journal article" date="2012" name="J. Biol. Chem.">
        <title>Down syndrome cell adhesion molecule (DSCAM) associates with uncoordinated-5C (UNC5C) in netrin-1-mediated growth cone collapse.</title>
        <authorList>
            <person name="Purohit A.A."/>
            <person name="Li W."/>
            <person name="Qu C."/>
            <person name="Dwyer T."/>
            <person name="Shao Q."/>
            <person name="Guan K.L."/>
            <person name="Liu G."/>
        </authorList>
    </citation>
    <scope>FUNCTION</scope>
    <scope>INTERACTION WITH UNC5C; PTK2 AND FYN</scope>
    <scope>SUBCELLULAR LOCATION</scope>
    <scope>TISSUE SPECIFICITY</scope>
    <scope>DEVELOPMENTAL STAGE</scope>
    <scope>PHOSPHORYLATION</scope>
</reference>
<comment type="function">
    <text evidence="1 2 9 10 11 12 13">Cell adhesion molecule that plays a role in neuronal self-avoidance. Promotes repulsion between specific neuronal processes of either the same cell or the same subtype of cells. Mediates within retinal amacrine and ganglion cell subtypes both isoneuronal self-avoidance for creating an orderly dendritic arborization and heteroneuronal self-avoidance to maintain the mosaic spacing between amacrine and ganglion cell bodies (PubMed:18216855, PubMed:19196994, PubMed:19945391). Receptor for netrin required for axon guidance independently of and in collaboration with the receptor DCC (PubMed:18585357). Might also collaborate with UNC5C in NTN1-mediated axon repulsion independently of DCC (PubMed:22685302). In spinal cord development plays a role in guiding commissural axons projection and pathfinding across the ventral midline to reach the floor plate upon ligand binding. Mediates intracellular signaling by stimulating the activation of MAPK8 and MAP kinase p38. Adhesion molecule that promotes lamina-specific synaptic connections in the retina: expressed in specific subsets of interneurons and retinal ganglion cells (RGCs) and promotes synaptic connectivity via homophilic interactions (By similarity).</text>
</comment>
<comment type="subunit">
    <text evidence="1 2 10 13">Homodimer; mediates homophilic interactions to promote cell adhesion (By similarity). Interacts with DCC; the interaction is abolished in response to NTN1 (PubMed:18585357). Interacts (via extracellular domain) with NTN1 (PubMed:18585357). Interacts (via extracellular domain) with UNC5C (via Ig-like C2-type domain) (PubMed:22685302). Interacts with PTK2 (PubMed:22685302). Interacts with FYN (PubMed:22685302).</text>
</comment>
<comment type="interaction">
    <interactant intactId="EBI-1798601">
        <id>Q9ERC8</id>
    </interactant>
    <interactant intactId="EBI-1798863">
        <id>P70211</id>
        <label>Dcc</label>
    </interactant>
    <organismsDiffer>false</organismsDiffer>
    <experiments>4</experiments>
</comment>
<comment type="interaction">
    <interactant intactId="EBI-1798601">
        <id>Q9ERC8</id>
    </interactant>
    <interactant intactId="EBI-80344">
        <id>Q61214</id>
        <label>Dyrk1a</label>
    </interactant>
    <organismsDiffer>false</organismsDiffer>
    <experiments>2</experiments>
</comment>
<comment type="interaction">
    <interactant intactId="EBI-1798601">
        <id>Q9ERC8</id>
    </interactant>
    <interactant intactId="EBI-1798965">
        <id>Q63155</id>
        <label>Dcc</label>
    </interactant>
    <organismsDiffer>true</organismsDiffer>
    <experiments>4</experiments>
</comment>
<comment type="interaction">
    <interactant intactId="EBI-1798601">
        <id>Q9ERC8</id>
    </interactant>
    <interactant intactId="EBI-1798593">
        <id>Q90922</id>
        <label>NTN1</label>
    </interactant>
    <organismsDiffer>true</organismsDiffer>
    <experiments>7</experiments>
</comment>
<comment type="subcellular location">
    <subcellularLocation>
        <location evidence="11">Cell membrane</location>
        <topology evidence="14">Single-pass type I membrane protein</topology>
    </subcellularLocation>
    <subcellularLocation>
        <location evidence="11 13">Cell projection</location>
        <location evidence="11 13">Axon</location>
    </subcellularLocation>
    <subcellularLocation>
        <location evidence="1">Synapse</location>
    </subcellularLocation>
    <subcellularLocation>
        <location evidence="13">Cell projection</location>
        <location evidence="13">Dendrite</location>
    </subcellularLocation>
    <subcellularLocation>
        <location evidence="13">Cell projection</location>
        <location evidence="13">Growth cone</location>
    </subcellularLocation>
    <text evidence="11">Localized in the soma, cell membrane, axon and growth cone of dissociated commissural axons.</text>
</comment>
<comment type="tissue specificity">
    <text evidence="7 8 9 12 13">Expressed in cortical and cerebellar neurons, in cells of the external and internal granular layer and of the Purkinje cell layer (at protein level) (PubMed:22685302). In the retina, expressed in dopaminergic and Nos1-positive amacrine cells and most retinal ganglion cells (at protein level). Expressed in the brain with highest levels in the cortex, olfactory bulb, hippocampus, thalamus, cerebellum and spinal cord. Expressed in the retinal ganglion layer (RGL).</text>
</comment>
<comment type="developmental stage">
    <text evidence="7 11 12 13">Expressed in embryo at 11 dpc. Expressed in the spinal cord, including the motor columns, motor axons, dorsal root ganglions, commissural axons and ventral funiculus at 11.5 dpc (at protein level). Detected at 15 dpc in the cortex and cerebellum and at postnatal day 2 in the cerebellum (at protein level) (PubMed:22685302). Expressed in the retinal ganglion layer (RGL) at 12.5, 14.5 and 17 dpc. Expressed in hindbrain (cerebellar plate neurons), midbrain and forebrain at 10 dpc. Expressed in follicles of vibrissae and nasal processes at 12 dpc. Expressed in eyes at 14 dpc. Expressed in spinal cord, heart, liver, forelimb and hindlimb, buds at 14 dpc onwards.</text>
</comment>
<comment type="domain">
    <text>Ig-like C2-type domains 7 to 9 are sufficient for interaction with NTN1 and commissural axon outgrowth. The transmembrane domain is necessary for interaction with DCC.</text>
</comment>
<comment type="PTM">
    <text evidence="13">Phosphorylated at tyrosine residues (PubMed:22685302). Phosphorylation is enhanced by NTN1 (PubMed:22685302).</text>
</comment>
<comment type="disruption phenotype">
    <text evidence="9 12">The ganglion cell layer and developing inner plexiform layer in the retina are disorganised at postnatal day 4 (P4). This desorganisation persisted into adulthood in amacrine and ganglions cells. Amacrine and ganglion cell populations show fasciculated dendrites that self-crossed and their cell bodies are randomly distributed or pulled into clumps.</text>
</comment>
<comment type="caution">
    <text evidence="15 16">Has been reported to enhance netrin-induced phosphorylation of PAK1 and FYN; and the interaction between DSCAM, PAK1 and RAC1 has been described. This article has been withdrawn by the authors.</text>
</comment>
<gene>
    <name type="primary">Dscam</name>
</gene>
<name>DSCAM_MOUSE</name>
<feature type="signal peptide" evidence="3">
    <location>
        <begin position="1"/>
        <end position="17"/>
    </location>
</feature>
<feature type="chain" id="PRO_0000392478" description="Cell adhesion molecule DSCAM">
    <location>
        <begin position="18"/>
        <end position="2013"/>
    </location>
</feature>
<feature type="topological domain" description="Extracellular" evidence="3">
    <location>
        <begin position="18"/>
        <end position="1594"/>
    </location>
</feature>
<feature type="transmembrane region" description="Helical" evidence="3">
    <location>
        <begin position="1595"/>
        <end position="1615"/>
    </location>
</feature>
<feature type="topological domain" description="Cytoplasmic" evidence="3">
    <location>
        <begin position="1616"/>
        <end position="2013"/>
    </location>
</feature>
<feature type="domain" description="Ig-like C2-type 1">
    <location>
        <begin position="20"/>
        <end position="119"/>
    </location>
</feature>
<feature type="domain" description="Ig-like C2-type 2">
    <location>
        <begin position="125"/>
        <end position="216"/>
    </location>
</feature>
<feature type="domain" description="Ig-like C2-type 3">
    <location>
        <begin position="225"/>
        <end position="305"/>
    </location>
</feature>
<feature type="domain" description="Ig-like C2-type 4">
    <location>
        <begin position="313"/>
        <end position="401"/>
    </location>
</feature>
<feature type="domain" description="Ig-like C2-type 5">
    <location>
        <begin position="407"/>
        <end position="500"/>
    </location>
</feature>
<feature type="domain" description="Ig-like C2-type 6">
    <location>
        <begin position="504"/>
        <end position="592"/>
    </location>
</feature>
<feature type="domain" description="Ig-like C2-type 7">
    <location>
        <begin position="596"/>
        <end position="685"/>
    </location>
</feature>
<feature type="domain" description="Ig-like C2-type 8">
    <location>
        <begin position="690"/>
        <end position="783"/>
    </location>
</feature>
<feature type="domain" description="Ig-like C2-type 9">
    <location>
        <begin position="787"/>
        <end position="883"/>
    </location>
</feature>
<feature type="domain" description="Fibronectin type-III 1" evidence="5">
    <location>
        <begin position="885"/>
        <end position="982"/>
    </location>
</feature>
<feature type="domain" description="Fibronectin type-III 2" evidence="5">
    <location>
        <begin position="987"/>
        <end position="1086"/>
    </location>
</feature>
<feature type="domain" description="Fibronectin type-III 3" evidence="5">
    <location>
        <begin position="1091"/>
        <end position="1187"/>
    </location>
</feature>
<feature type="domain" description="Fibronectin type-III 4" evidence="5">
    <location>
        <begin position="1191"/>
        <end position="1285"/>
    </location>
</feature>
<feature type="domain" description="Ig-like C2-type 10">
    <location>
        <begin position="1285"/>
        <end position="1377"/>
    </location>
</feature>
<feature type="domain" description="Fibronectin type-III 5" evidence="5">
    <location>
        <begin position="1379"/>
        <end position="1473"/>
    </location>
</feature>
<feature type="domain" description="Fibronectin type-III 6" evidence="5">
    <location>
        <begin position="1474"/>
        <end position="1575"/>
    </location>
</feature>
<feature type="region of interest" description="Required for netrin-mediated axon repulsion of neuronal growth cones" evidence="13">
    <location>
        <begin position="1616"/>
        <end position="2013"/>
    </location>
</feature>
<feature type="region of interest" description="Disordered" evidence="6">
    <location>
        <begin position="1718"/>
        <end position="1809"/>
    </location>
</feature>
<feature type="region of interest" description="Disordered" evidence="6">
    <location>
        <begin position="1920"/>
        <end position="2013"/>
    </location>
</feature>
<feature type="compositionally biased region" description="Low complexity" evidence="6">
    <location>
        <begin position="1799"/>
        <end position="1809"/>
    </location>
</feature>
<feature type="compositionally biased region" description="Polar residues" evidence="6">
    <location>
        <begin position="1949"/>
        <end position="1968"/>
    </location>
</feature>
<feature type="glycosylation site" description="N-linked (GlcNAc...) asparagine" evidence="3">
    <location>
        <position position="78"/>
    </location>
</feature>
<feature type="glycosylation site" description="N-linked (GlcNAc...) asparagine" evidence="3">
    <location>
        <position position="470"/>
    </location>
</feature>
<feature type="glycosylation site" description="N-linked (GlcNAc...) asparagine" evidence="3">
    <location>
        <position position="666"/>
    </location>
</feature>
<feature type="glycosylation site" description="N-linked (GlcNAc...) asparagine" evidence="3">
    <location>
        <position position="1160"/>
    </location>
</feature>
<feature type="glycosylation site" description="N-linked (GlcNAc...) asparagine" evidence="3">
    <location>
        <position position="1250"/>
    </location>
</feature>
<feature type="disulfide bond" evidence="4">
    <location>
        <begin position="46"/>
        <end position="102"/>
    </location>
</feature>
<feature type="disulfide bond" evidence="4">
    <location>
        <begin position="145"/>
        <end position="197"/>
    </location>
</feature>
<feature type="disulfide bond" evidence="4">
    <location>
        <begin position="246"/>
        <end position="293"/>
    </location>
</feature>
<feature type="disulfide bond" evidence="4">
    <location>
        <begin position="335"/>
        <end position="385"/>
    </location>
</feature>
<feature type="disulfide bond" evidence="4">
    <location>
        <begin position="428"/>
        <end position="484"/>
    </location>
</feature>
<feature type="disulfide bond" evidence="4">
    <location>
        <begin position="525"/>
        <end position="575"/>
    </location>
</feature>
<feature type="disulfide bond" evidence="4">
    <location>
        <begin position="617"/>
        <end position="669"/>
    </location>
</feature>
<feature type="disulfide bond" evidence="4">
    <location>
        <begin position="711"/>
        <end position="766"/>
    </location>
</feature>
<feature type="disulfide bond" evidence="4">
    <location>
        <begin position="809"/>
        <end position="865"/>
    </location>
</feature>
<feature type="disulfide bond" evidence="4">
    <location>
        <begin position="1307"/>
        <end position="1359"/>
    </location>
</feature>
<proteinExistence type="evidence at protein level"/>
<evidence type="ECO:0000250" key="1">
    <source>
        <dbReference type="UniProtKB" id="F1NY98"/>
    </source>
</evidence>
<evidence type="ECO:0000250" key="2">
    <source>
        <dbReference type="UniProtKB" id="O60469"/>
    </source>
</evidence>
<evidence type="ECO:0000255" key="3"/>
<evidence type="ECO:0000255" key="4">
    <source>
        <dbReference type="PROSITE-ProRule" id="PRU00114"/>
    </source>
</evidence>
<evidence type="ECO:0000255" key="5">
    <source>
        <dbReference type="PROSITE-ProRule" id="PRU00316"/>
    </source>
</evidence>
<evidence type="ECO:0000256" key="6">
    <source>
        <dbReference type="SAM" id="MobiDB-lite"/>
    </source>
</evidence>
<evidence type="ECO:0000269" key="7">
    <source>
    </source>
</evidence>
<evidence type="ECO:0000269" key="8">
    <source>
    </source>
</evidence>
<evidence type="ECO:0000269" key="9">
    <source>
    </source>
</evidence>
<evidence type="ECO:0000269" key="10">
    <source>
    </source>
</evidence>
<evidence type="ECO:0000269" key="11">
    <source>
    </source>
</evidence>
<evidence type="ECO:0000269" key="12">
    <source>
    </source>
</evidence>
<evidence type="ECO:0000269" key="13">
    <source>
    </source>
</evidence>
<evidence type="ECO:0000305" key="14"/>
<evidence type="ECO:0000305" key="15">
    <source>
    </source>
</evidence>
<evidence type="ECO:0000305" key="16">
    <source>
    </source>
</evidence>